<dbReference type="EMBL" id="AP005688">
    <property type="protein sequence ID" value="BAD62070.1"/>
    <property type="molecule type" value="Genomic_DNA"/>
</dbReference>
<dbReference type="EMBL" id="AP005688">
    <property type="protein sequence ID" value="BAD62071.1"/>
    <property type="status" value="ALT_SEQ"/>
    <property type="molecule type" value="Genomic_DNA"/>
</dbReference>
<dbReference type="EMBL" id="AP008212">
    <property type="protein sequence ID" value="BAF19497.2"/>
    <property type="status" value="ALT_SEQ"/>
    <property type="molecule type" value="Genomic_DNA"/>
</dbReference>
<dbReference type="EMBL" id="AP014962">
    <property type="protein sequence ID" value="BAS97664.1"/>
    <property type="molecule type" value="Genomic_DNA"/>
</dbReference>
<dbReference type="EMBL" id="AK061946">
    <property type="protein sequence ID" value="BAG88181.1"/>
    <property type="status" value="ALT_INIT"/>
    <property type="molecule type" value="mRNA"/>
</dbReference>
<dbReference type="EMBL" id="AK065184">
    <property type="protein sequence ID" value="BAG89405.1"/>
    <property type="molecule type" value="mRNA"/>
</dbReference>
<dbReference type="EMBL" id="AK098909">
    <property type="protein sequence ID" value="BAG93805.1"/>
    <property type="molecule type" value="mRNA"/>
</dbReference>
<dbReference type="EMBL" id="AK122161">
    <property type="protein sequence ID" value="BAH00827.1"/>
    <property type="status" value="ALT_INIT"/>
    <property type="molecule type" value="mRNA"/>
</dbReference>
<dbReference type="RefSeq" id="XP_015644244.1">
    <property type="nucleotide sequence ID" value="XM_015788758.1"/>
</dbReference>
<dbReference type="SMR" id="Q5Z5I4"/>
<dbReference type="FunCoup" id="Q5Z5I4">
    <property type="interactions" value="1964"/>
</dbReference>
<dbReference type="STRING" id="39947.Q5Z5I4"/>
<dbReference type="PaxDb" id="39947-Q5Z5I4"/>
<dbReference type="EnsemblPlants" id="Os06t0348800-01">
    <property type="protein sequence ID" value="Os06t0348800-01"/>
    <property type="gene ID" value="Os06g0348800"/>
</dbReference>
<dbReference type="EnsemblPlants" id="Os06t0348800-03">
    <property type="protein sequence ID" value="Os06t0348800-03"/>
    <property type="gene ID" value="Os06g0348800"/>
</dbReference>
<dbReference type="Gramene" id="Os06t0348800-01">
    <property type="protein sequence ID" value="Os06t0348800-01"/>
    <property type="gene ID" value="Os06g0348800"/>
</dbReference>
<dbReference type="Gramene" id="Os06t0348800-03">
    <property type="protein sequence ID" value="Os06t0348800-03"/>
    <property type="gene ID" value="Os06g0348800"/>
</dbReference>
<dbReference type="KEGG" id="dosa:Os06g0348800"/>
<dbReference type="eggNOG" id="ENOG502QWCV">
    <property type="taxonomic scope" value="Eukaryota"/>
</dbReference>
<dbReference type="InParanoid" id="Q5Z5I4"/>
<dbReference type="OMA" id="YWHQHQR"/>
<dbReference type="OrthoDB" id="60033at2759"/>
<dbReference type="Proteomes" id="UP000000763">
    <property type="component" value="Chromosome 6"/>
</dbReference>
<dbReference type="Proteomes" id="UP000059680">
    <property type="component" value="Chromosome 6"/>
</dbReference>
<dbReference type="ExpressionAtlas" id="Q5Z5I4">
    <property type="expression patterns" value="baseline and differential"/>
</dbReference>
<dbReference type="GO" id="GO:0005634">
    <property type="term" value="C:nucleus"/>
    <property type="evidence" value="ECO:0000318"/>
    <property type="project" value="GO_Central"/>
</dbReference>
<dbReference type="GO" id="GO:0003700">
    <property type="term" value="F:DNA-binding transcription factor activity"/>
    <property type="evidence" value="ECO:0000318"/>
    <property type="project" value="GO_Central"/>
</dbReference>
<dbReference type="GO" id="GO:0000976">
    <property type="term" value="F:transcription cis-regulatory region binding"/>
    <property type="evidence" value="ECO:0000318"/>
    <property type="project" value="GO_Central"/>
</dbReference>
<dbReference type="GO" id="GO:0045893">
    <property type="term" value="P:positive regulation of DNA-templated transcription"/>
    <property type="evidence" value="ECO:0000316"/>
    <property type="project" value="UniProtKB"/>
</dbReference>
<dbReference type="GO" id="GO:0010638">
    <property type="term" value="P:positive regulation of organelle organization"/>
    <property type="evidence" value="ECO:0000316"/>
    <property type="project" value="UniProtKB"/>
</dbReference>
<dbReference type="FunFam" id="1.10.10.60:FF:000007">
    <property type="entry name" value="Two-component response regulator"/>
    <property type="match status" value="1"/>
</dbReference>
<dbReference type="Gene3D" id="1.10.10.60">
    <property type="entry name" value="Homeodomain-like"/>
    <property type="match status" value="1"/>
</dbReference>
<dbReference type="InterPro" id="IPR044825">
    <property type="entry name" value="GLK1/2-like"/>
</dbReference>
<dbReference type="InterPro" id="IPR009057">
    <property type="entry name" value="Homeodomain-like_sf"/>
</dbReference>
<dbReference type="InterPro" id="IPR017930">
    <property type="entry name" value="Myb_dom"/>
</dbReference>
<dbReference type="InterPro" id="IPR006447">
    <property type="entry name" value="Myb_dom_plants"/>
</dbReference>
<dbReference type="InterPro" id="IPR001005">
    <property type="entry name" value="SANT/Myb"/>
</dbReference>
<dbReference type="NCBIfam" id="TIGR01557">
    <property type="entry name" value="myb_SHAQKYF"/>
    <property type="match status" value="1"/>
</dbReference>
<dbReference type="PANTHER" id="PTHR31312">
    <property type="entry name" value="TRANSCRIPTION ACTIVATOR GLK1"/>
    <property type="match status" value="1"/>
</dbReference>
<dbReference type="PANTHER" id="PTHR31312:SF3">
    <property type="entry name" value="TRANSCRIPTION FACTOR GLK1-RELATED"/>
    <property type="match status" value="1"/>
</dbReference>
<dbReference type="Pfam" id="PF00249">
    <property type="entry name" value="Myb_DNA-binding"/>
    <property type="match status" value="1"/>
</dbReference>
<dbReference type="SUPFAM" id="SSF46689">
    <property type="entry name" value="Homeodomain-like"/>
    <property type="match status" value="1"/>
</dbReference>
<dbReference type="PROSITE" id="PS51294">
    <property type="entry name" value="HTH_MYB"/>
    <property type="match status" value="1"/>
</dbReference>
<name>GLK1_ORYSJ</name>
<protein>
    <recommendedName>
        <fullName>Probable transcription factor GLK1</fullName>
    </recommendedName>
    <alternativeName>
        <fullName>Golden2-like protein 1</fullName>
        <shortName>OsGLK1</shortName>
    </alternativeName>
</protein>
<reference key="1">
    <citation type="journal article" date="2005" name="Nature">
        <title>The map-based sequence of the rice genome.</title>
        <authorList>
            <consortium name="International rice genome sequencing project (IRGSP)"/>
        </authorList>
    </citation>
    <scope>NUCLEOTIDE SEQUENCE [LARGE SCALE GENOMIC DNA]</scope>
    <source>
        <strain>cv. Nipponbare</strain>
    </source>
</reference>
<reference key="2">
    <citation type="journal article" date="2008" name="Nucleic Acids Res.">
        <title>The rice annotation project database (RAP-DB): 2008 update.</title>
        <authorList>
            <consortium name="The rice annotation project (RAP)"/>
        </authorList>
    </citation>
    <scope>GENOME REANNOTATION</scope>
    <source>
        <strain>cv. Nipponbare</strain>
    </source>
</reference>
<reference key="3">
    <citation type="journal article" date="2013" name="Rice">
        <title>Improvement of the Oryza sativa Nipponbare reference genome using next generation sequence and optical map data.</title>
        <authorList>
            <person name="Kawahara Y."/>
            <person name="de la Bastide M."/>
            <person name="Hamilton J.P."/>
            <person name="Kanamori H."/>
            <person name="McCombie W.R."/>
            <person name="Ouyang S."/>
            <person name="Schwartz D.C."/>
            <person name="Tanaka T."/>
            <person name="Wu J."/>
            <person name="Zhou S."/>
            <person name="Childs K.L."/>
            <person name="Davidson R.M."/>
            <person name="Lin H."/>
            <person name="Quesada-Ocampo L."/>
            <person name="Vaillancourt B."/>
            <person name="Sakai H."/>
            <person name="Lee S.S."/>
            <person name="Kim J."/>
            <person name="Numa H."/>
            <person name="Itoh T."/>
            <person name="Buell C.R."/>
            <person name="Matsumoto T."/>
        </authorList>
    </citation>
    <scope>GENOME REANNOTATION</scope>
    <source>
        <strain>cv. Nipponbare</strain>
    </source>
</reference>
<reference key="4">
    <citation type="journal article" date="2003" name="Science">
        <title>Collection, mapping, and annotation of over 28,000 cDNA clones from japonica rice.</title>
        <authorList>
            <consortium name="The rice full-length cDNA consortium"/>
        </authorList>
    </citation>
    <scope>NUCLEOTIDE SEQUENCE [LARGE SCALE MRNA]</scope>
    <source>
        <strain>cv. Nipponbare</strain>
    </source>
</reference>
<reference key="5">
    <citation type="journal article" date="2001" name="Plant Cell">
        <title>The maize golden2 gene defines a novel class of transcriptional regulators in plants.</title>
        <authorList>
            <person name="Rossini L."/>
            <person name="Cribb L."/>
            <person name="Martin D.J."/>
            <person name="Langdale J.A."/>
        </authorList>
    </citation>
    <scope>TISSUE SPECIFICITY</scope>
    <scope>INDUCTION</scope>
</reference>
<reference key="6">
    <citation type="journal article" date="2009" name="Plant Cell Physiol.">
        <title>Ectopic overexpression of the transcription factor OsGLK1 induces chloroplast development in non-green rice cells.</title>
        <authorList>
            <person name="Nakamura H."/>
            <person name="Muramatsu M."/>
            <person name="Hakata M."/>
            <person name="Ueno O."/>
            <person name="Nagamura Y."/>
            <person name="Hirochika H."/>
            <person name="Takano M."/>
            <person name="Ichikawa H."/>
        </authorList>
    </citation>
    <scope>FUNCTION</scope>
</reference>
<accession>Q5Z5I4</accession>
<accession>A0A0P0WWC7</accession>
<accession>B7E734</accession>
<accession>Q5Z5I3</accession>
<organism>
    <name type="scientific">Oryza sativa subsp. japonica</name>
    <name type="common">Rice</name>
    <dbReference type="NCBI Taxonomy" id="39947"/>
    <lineage>
        <taxon>Eukaryota</taxon>
        <taxon>Viridiplantae</taxon>
        <taxon>Streptophyta</taxon>
        <taxon>Embryophyta</taxon>
        <taxon>Tracheophyta</taxon>
        <taxon>Spermatophyta</taxon>
        <taxon>Magnoliopsida</taxon>
        <taxon>Liliopsida</taxon>
        <taxon>Poales</taxon>
        <taxon>Poaceae</taxon>
        <taxon>BOP clade</taxon>
        <taxon>Oryzoideae</taxon>
        <taxon>Oryzeae</taxon>
        <taxon>Oryzinae</taxon>
        <taxon>Oryza</taxon>
        <taxon>Oryza sativa</taxon>
    </lineage>
</organism>
<keyword id="KW-0238">DNA-binding</keyword>
<keyword id="KW-0539">Nucleus</keyword>
<keyword id="KW-1185">Reference proteome</keyword>
<keyword id="KW-0804">Transcription</keyword>
<keyword id="KW-0805">Transcription regulation</keyword>
<sequence>MLAVSPAMCPDIEDRAAVAGDAGMEVVGMSSDDMDQFDFSVDDIDFGDFFLRLEDGDVLPDLEVDPAEIFTDFEAIATSGGEGVQDQEVPTVELLAPADDVGVLDPCGDVVVGEENAAFAGAGEEKGGCNQDDDAGEANVDDGAAAVEAKSSSPSSTTSSSQEAESRHKSSSKSSHGKKKAKVDWTPELHRRFVQAVEQLGIDKAVPSRILEIMGIDSLTRHNIASHLQKYRSHRKHMIAREAEAASWTQRRQIYAAGGGAVAKRPESNAWTVPTIGFPPPPPPPPSPAPIQHFARPLHVWGHPTMDPSRVPVWPPRHLVPRGPAPPWVPPPPPSDPAFWHHPYMRGPAHVPTQGTPCMAMPMPAARFPAPPVPGVVPCPMYRPLTPPALASKNQQDAQLQLQVQPSSESIDAAIGDVLSKPWLPLPLGLKPPSVDSVMGELQRQGVANVPPACG</sequence>
<comment type="function">
    <text evidence="4">Probable transcriptional activator that promotes chloroplast development. Acts as an activator of nuclear photosynthetic genes involved in chlorophyll biosynthesis, light harvesting, and electron transport.</text>
</comment>
<comment type="subcellular location">
    <subcellularLocation>
        <location evidence="5">Nucleus</location>
    </subcellularLocation>
</comment>
<comment type="tissue specificity">
    <text evidence="3">Expressed in leaves.</text>
</comment>
<comment type="induction">
    <text evidence="3">By light.</text>
</comment>
<comment type="sequence caution" evidence="5">
    <conflict type="erroneous gene model prediction">
        <sequence resource="EMBL-CDS" id="BAD62071"/>
    </conflict>
</comment>
<comment type="sequence caution" evidence="5">
    <conflict type="erroneous gene model prediction">
        <sequence resource="EMBL-CDS" id="BAF19497"/>
    </conflict>
</comment>
<comment type="sequence caution" evidence="5">
    <conflict type="erroneous initiation">
        <sequence resource="EMBL-CDS" id="BAG88181"/>
    </conflict>
    <text>Truncated N-terminus.</text>
</comment>
<comment type="sequence caution" evidence="5">
    <conflict type="erroneous initiation">
        <sequence resource="EMBL-CDS" id="BAH00827"/>
    </conflict>
    <text>Truncated N-terminus.</text>
</comment>
<feature type="chain" id="PRO_0000408387" description="Probable transcription factor GLK1">
    <location>
        <begin position="1"/>
        <end position="455"/>
    </location>
</feature>
<feature type="domain" description="HTH myb-type" evidence="1">
    <location>
        <begin position="177"/>
        <end position="236"/>
    </location>
</feature>
<feature type="DNA-binding region" description="H-T-H motif" evidence="1">
    <location>
        <begin position="207"/>
        <end position="232"/>
    </location>
</feature>
<feature type="region of interest" description="Disordered" evidence="2">
    <location>
        <begin position="145"/>
        <end position="183"/>
    </location>
</feature>
<feature type="compositionally biased region" description="Low complexity" evidence="2">
    <location>
        <begin position="145"/>
        <end position="163"/>
    </location>
</feature>
<feature type="compositionally biased region" description="Basic residues" evidence="2">
    <location>
        <begin position="169"/>
        <end position="181"/>
    </location>
</feature>
<evidence type="ECO:0000255" key="1">
    <source>
        <dbReference type="PROSITE-ProRule" id="PRU00625"/>
    </source>
</evidence>
<evidence type="ECO:0000256" key="2">
    <source>
        <dbReference type="SAM" id="MobiDB-lite"/>
    </source>
</evidence>
<evidence type="ECO:0000269" key="3">
    <source>
    </source>
</evidence>
<evidence type="ECO:0000269" key="4">
    <source>
    </source>
</evidence>
<evidence type="ECO:0000305" key="5"/>
<gene>
    <name type="primary">GLK1</name>
    <name type="ordered locus">Os06g0348800</name>
    <name type="ordered locus">LOC_Os06g24070</name>
    <name type="ORF">OSJNBa0031J07.13</name>
</gene>
<proteinExistence type="evidence at transcript level"/>